<evidence type="ECO:0000250" key="1"/>
<evidence type="ECO:0000255" key="2">
    <source>
        <dbReference type="PROSITE-ProRule" id="PRU10009"/>
    </source>
</evidence>
<evidence type="ECO:0000305" key="3"/>
<reference key="1">
    <citation type="journal article" date="1992" name="Curr. Genet.">
        <title>Sequence analysis of the gene coding for glyceraldehyde-3-phosphate dehydrogenase (gpd) of Podospora anserina: use of homologous regulatory sequences to improve transformation efficiency.</title>
        <authorList>
            <person name="Ridder R."/>
            <person name="Osiewacz H.D."/>
        </authorList>
    </citation>
    <scope>NUCLEOTIDE SEQUENCE [GENOMIC DNA]</scope>
</reference>
<organism>
    <name type="scientific">Podospora anserina</name>
    <name type="common">Pleurage anserina</name>
    <dbReference type="NCBI Taxonomy" id="2587412"/>
    <lineage>
        <taxon>Eukaryota</taxon>
        <taxon>Fungi</taxon>
        <taxon>Dikarya</taxon>
        <taxon>Ascomycota</taxon>
        <taxon>Pezizomycotina</taxon>
        <taxon>Sordariomycetes</taxon>
        <taxon>Sordariomycetidae</taxon>
        <taxon>Sordariales</taxon>
        <taxon>Podosporaceae</taxon>
        <taxon>Podospora</taxon>
    </lineage>
</organism>
<proteinExistence type="inferred from homology"/>
<name>G3P_PODAS</name>
<keyword id="KW-0963">Cytoplasm</keyword>
<keyword id="KW-0324">Glycolysis</keyword>
<keyword id="KW-0520">NAD</keyword>
<keyword id="KW-0560">Oxidoreductase</keyword>
<dbReference type="EC" id="1.2.1.12"/>
<dbReference type="EMBL" id="X62824">
    <property type="protein sequence ID" value="CAA44635.1"/>
    <property type="molecule type" value="Genomic_DNA"/>
</dbReference>
<dbReference type="PIR" id="S26863">
    <property type="entry name" value="S26863"/>
</dbReference>
<dbReference type="SMR" id="P32637"/>
<dbReference type="VEuPathDB" id="FungiDB:PODANS_3_5110"/>
<dbReference type="UniPathway" id="UPA00109">
    <property type="reaction ID" value="UER00184"/>
</dbReference>
<dbReference type="GO" id="GO:0005829">
    <property type="term" value="C:cytosol"/>
    <property type="evidence" value="ECO:0007669"/>
    <property type="project" value="TreeGrafter"/>
</dbReference>
<dbReference type="GO" id="GO:0004365">
    <property type="term" value="F:glyceraldehyde-3-phosphate dehydrogenase (NAD+) (phosphorylating) activity"/>
    <property type="evidence" value="ECO:0007669"/>
    <property type="project" value="UniProtKB-EC"/>
</dbReference>
<dbReference type="GO" id="GO:0051287">
    <property type="term" value="F:NAD binding"/>
    <property type="evidence" value="ECO:0007669"/>
    <property type="project" value="InterPro"/>
</dbReference>
<dbReference type="GO" id="GO:0050661">
    <property type="term" value="F:NADP binding"/>
    <property type="evidence" value="ECO:0007669"/>
    <property type="project" value="InterPro"/>
</dbReference>
<dbReference type="GO" id="GO:0006006">
    <property type="term" value="P:glucose metabolic process"/>
    <property type="evidence" value="ECO:0007669"/>
    <property type="project" value="InterPro"/>
</dbReference>
<dbReference type="GO" id="GO:0006096">
    <property type="term" value="P:glycolytic process"/>
    <property type="evidence" value="ECO:0007669"/>
    <property type="project" value="UniProtKB-UniPathway"/>
</dbReference>
<dbReference type="CDD" id="cd18126">
    <property type="entry name" value="GAPDH_I_C"/>
    <property type="match status" value="1"/>
</dbReference>
<dbReference type="CDD" id="cd05214">
    <property type="entry name" value="GAPDH_I_N"/>
    <property type="match status" value="1"/>
</dbReference>
<dbReference type="FunFam" id="3.30.360.10:FF:000001">
    <property type="entry name" value="Glyceraldehyde-3-phosphate dehydrogenase"/>
    <property type="match status" value="1"/>
</dbReference>
<dbReference type="FunFam" id="3.40.50.720:FF:000020">
    <property type="entry name" value="Glyceraldehyde-3-phosphate dehydrogenase"/>
    <property type="match status" value="1"/>
</dbReference>
<dbReference type="Gene3D" id="3.30.360.10">
    <property type="entry name" value="Dihydrodipicolinate Reductase, domain 2"/>
    <property type="match status" value="1"/>
</dbReference>
<dbReference type="Gene3D" id="3.40.50.720">
    <property type="entry name" value="NAD(P)-binding Rossmann-like Domain"/>
    <property type="match status" value="1"/>
</dbReference>
<dbReference type="InterPro" id="IPR020831">
    <property type="entry name" value="GlycerAld/Erythrose_P_DH"/>
</dbReference>
<dbReference type="InterPro" id="IPR020830">
    <property type="entry name" value="GlycerAld_3-P_DH_AS"/>
</dbReference>
<dbReference type="InterPro" id="IPR020829">
    <property type="entry name" value="GlycerAld_3-P_DH_cat"/>
</dbReference>
<dbReference type="InterPro" id="IPR020828">
    <property type="entry name" value="GlycerAld_3-P_DH_NAD(P)-bd"/>
</dbReference>
<dbReference type="InterPro" id="IPR006424">
    <property type="entry name" value="Glyceraldehyde-3-P_DH_1"/>
</dbReference>
<dbReference type="InterPro" id="IPR036291">
    <property type="entry name" value="NAD(P)-bd_dom_sf"/>
</dbReference>
<dbReference type="NCBIfam" id="TIGR01534">
    <property type="entry name" value="GAPDH-I"/>
    <property type="match status" value="1"/>
</dbReference>
<dbReference type="PANTHER" id="PTHR10836">
    <property type="entry name" value="GLYCERALDEHYDE 3-PHOSPHATE DEHYDROGENASE"/>
    <property type="match status" value="1"/>
</dbReference>
<dbReference type="PANTHER" id="PTHR10836:SF76">
    <property type="entry name" value="GLYCERALDEHYDE-3-PHOSPHATE DEHYDROGENASE-RELATED"/>
    <property type="match status" value="1"/>
</dbReference>
<dbReference type="Pfam" id="PF02800">
    <property type="entry name" value="Gp_dh_C"/>
    <property type="match status" value="1"/>
</dbReference>
<dbReference type="Pfam" id="PF00044">
    <property type="entry name" value="Gp_dh_N"/>
    <property type="match status" value="1"/>
</dbReference>
<dbReference type="PIRSF" id="PIRSF000149">
    <property type="entry name" value="GAP_DH"/>
    <property type="match status" value="1"/>
</dbReference>
<dbReference type="PRINTS" id="PR00078">
    <property type="entry name" value="G3PDHDRGNASE"/>
</dbReference>
<dbReference type="SMART" id="SM00846">
    <property type="entry name" value="Gp_dh_N"/>
    <property type="match status" value="1"/>
</dbReference>
<dbReference type="SUPFAM" id="SSF55347">
    <property type="entry name" value="Glyceraldehyde-3-phosphate dehydrogenase-like, C-terminal domain"/>
    <property type="match status" value="1"/>
</dbReference>
<dbReference type="SUPFAM" id="SSF51735">
    <property type="entry name" value="NAD(P)-binding Rossmann-fold domains"/>
    <property type="match status" value="1"/>
</dbReference>
<dbReference type="PROSITE" id="PS00071">
    <property type="entry name" value="GAPDH"/>
    <property type="match status" value="1"/>
</dbReference>
<protein>
    <recommendedName>
        <fullName>Glyceraldehyde-3-phosphate dehydrogenase</fullName>
        <shortName>GAPDH</shortName>
        <ecNumber>1.2.1.12</ecNumber>
    </recommendedName>
</protein>
<comment type="catalytic activity">
    <reaction evidence="2">
        <text>D-glyceraldehyde 3-phosphate + phosphate + NAD(+) = (2R)-3-phospho-glyceroyl phosphate + NADH + H(+)</text>
        <dbReference type="Rhea" id="RHEA:10300"/>
        <dbReference type="ChEBI" id="CHEBI:15378"/>
        <dbReference type="ChEBI" id="CHEBI:43474"/>
        <dbReference type="ChEBI" id="CHEBI:57540"/>
        <dbReference type="ChEBI" id="CHEBI:57604"/>
        <dbReference type="ChEBI" id="CHEBI:57945"/>
        <dbReference type="ChEBI" id="CHEBI:59776"/>
        <dbReference type="EC" id="1.2.1.12"/>
    </reaction>
</comment>
<comment type="pathway">
    <text>Carbohydrate degradation; glycolysis; pyruvate from D-glyceraldehyde 3-phosphate: step 1/5.</text>
</comment>
<comment type="subunit">
    <text>Homotetramer.</text>
</comment>
<comment type="subcellular location">
    <subcellularLocation>
        <location>Cytoplasm</location>
    </subcellularLocation>
</comment>
<comment type="similarity">
    <text evidence="3">Belongs to the glyceraldehyde-3-phosphate dehydrogenase family.</text>
</comment>
<sequence length="337" mass="36211">MTVKVGINGFGRIGRIVFRNAVEHPDVEIVAVNDPFIEPKYAEYMLKYDSTHGVFKGTIQVSGSDLIVNGKTVKFYTERDPSAIPWKDTGAEYIVESTGVFTTTEKASAHLKGGAKRVIISAPSADAPMYVMGVNEKTYDGKAAVISNASCTTNCLAPLAKVVNDKFGIVEGLMTTVHSYTATQKTVDGPSAKDWRGGRGAAQNIIPSSTGAAKAVGKVIPELNGKLTGMAFRVPTSNVSVVDLTCRLEKPASYETIKAALKEASEGELKGILGYTEDEIVSSDLNGNANSSIFDAKAGISLNDNFVKLVSWYDNEWGYSRRVLDLLSYVAKYDASH</sequence>
<accession>P32637</accession>
<gene>
    <name type="primary">GPD</name>
</gene>
<feature type="chain" id="PRO_0000145574" description="Glyceraldehyde-3-phosphate dehydrogenase">
    <location>
        <begin position="1"/>
        <end position="337"/>
    </location>
</feature>
<feature type="active site" description="Nucleophile" evidence="2">
    <location>
        <position position="151"/>
    </location>
</feature>
<feature type="binding site" evidence="1">
    <location>
        <begin position="12"/>
        <end position="13"/>
    </location>
    <ligand>
        <name>NAD(+)</name>
        <dbReference type="ChEBI" id="CHEBI:57540"/>
    </ligand>
</feature>
<feature type="binding site" evidence="1">
    <location>
        <position position="34"/>
    </location>
    <ligand>
        <name>NAD(+)</name>
        <dbReference type="ChEBI" id="CHEBI:57540"/>
    </ligand>
</feature>
<feature type="binding site" evidence="1">
    <location>
        <position position="79"/>
    </location>
    <ligand>
        <name>NAD(+)</name>
        <dbReference type="ChEBI" id="CHEBI:57540"/>
    </ligand>
</feature>
<feature type="binding site" evidence="1">
    <location>
        <begin position="150"/>
        <end position="152"/>
    </location>
    <ligand>
        <name>D-glyceraldehyde 3-phosphate</name>
        <dbReference type="ChEBI" id="CHEBI:59776"/>
    </ligand>
</feature>
<feature type="binding site" evidence="1">
    <location>
        <position position="181"/>
    </location>
    <ligand>
        <name>D-glyceraldehyde 3-phosphate</name>
        <dbReference type="ChEBI" id="CHEBI:59776"/>
    </ligand>
</feature>
<feature type="binding site" evidence="1">
    <location>
        <begin position="210"/>
        <end position="211"/>
    </location>
    <ligand>
        <name>D-glyceraldehyde 3-phosphate</name>
        <dbReference type="ChEBI" id="CHEBI:59776"/>
    </ligand>
</feature>
<feature type="binding site" evidence="1">
    <location>
        <position position="233"/>
    </location>
    <ligand>
        <name>D-glyceraldehyde 3-phosphate</name>
        <dbReference type="ChEBI" id="CHEBI:59776"/>
    </ligand>
</feature>
<feature type="binding site" evidence="1">
    <location>
        <position position="315"/>
    </location>
    <ligand>
        <name>NAD(+)</name>
        <dbReference type="ChEBI" id="CHEBI:57540"/>
    </ligand>
</feature>
<feature type="site" description="Activates thiol group during catalysis" evidence="1">
    <location>
        <position position="178"/>
    </location>
</feature>